<accession>Q110A8</accession>
<evidence type="ECO:0000255" key="1">
    <source>
        <dbReference type="HAMAP-Rule" id="MF_01328"/>
    </source>
</evidence>
<evidence type="ECO:0000256" key="2">
    <source>
        <dbReference type="SAM" id="MobiDB-lite"/>
    </source>
</evidence>
<evidence type="ECO:0000305" key="3"/>
<protein>
    <recommendedName>
        <fullName evidence="1">Large ribosomal subunit protein uL4</fullName>
    </recommendedName>
    <alternativeName>
        <fullName evidence="3">50S ribosomal protein L4</fullName>
    </alternativeName>
</protein>
<proteinExistence type="inferred from homology"/>
<sequence>MVDCVVKNWQGEEVGQATLNLRVAKEESAAHIVHRSLRLQMANNRQGTASTKTRSEVRGGGRKPWRQKGTGRARAGSIRSPLWRGGGVIFGPKPRDYSHKMNRKEKRLALSTAFQSRSEDLIVIEDLSEQFTKPKTKELVQAITRWGIDIQAKIVLVLPEKQENVYLSGRNIAKLKIILANNLNIYDILAADKIIATVTAIAKIQEVYGNET</sequence>
<gene>
    <name evidence="1" type="primary">rplD</name>
    <name evidence="1" type="synonym">rpl4</name>
    <name type="ordered locus">Tery_3011</name>
</gene>
<keyword id="KW-0687">Ribonucleoprotein</keyword>
<keyword id="KW-0689">Ribosomal protein</keyword>
<keyword id="KW-0694">RNA-binding</keyword>
<keyword id="KW-0699">rRNA-binding</keyword>
<name>RL4_TRIEI</name>
<organism>
    <name type="scientific">Trichodesmium erythraeum (strain IMS101)</name>
    <dbReference type="NCBI Taxonomy" id="203124"/>
    <lineage>
        <taxon>Bacteria</taxon>
        <taxon>Bacillati</taxon>
        <taxon>Cyanobacteriota</taxon>
        <taxon>Cyanophyceae</taxon>
        <taxon>Oscillatoriophycideae</taxon>
        <taxon>Oscillatoriales</taxon>
        <taxon>Microcoleaceae</taxon>
        <taxon>Trichodesmium</taxon>
    </lineage>
</organism>
<dbReference type="EMBL" id="CP000393">
    <property type="protein sequence ID" value="ABG52166.1"/>
    <property type="molecule type" value="Genomic_DNA"/>
</dbReference>
<dbReference type="RefSeq" id="WP_011612521.1">
    <property type="nucleotide sequence ID" value="NC_008312.1"/>
</dbReference>
<dbReference type="SMR" id="Q110A8"/>
<dbReference type="STRING" id="203124.Tery_3011"/>
<dbReference type="KEGG" id="ter:Tery_3011"/>
<dbReference type="eggNOG" id="COG0088">
    <property type="taxonomic scope" value="Bacteria"/>
</dbReference>
<dbReference type="HOGENOM" id="CLU_041575_5_2_3"/>
<dbReference type="OrthoDB" id="9803201at2"/>
<dbReference type="GO" id="GO:1990904">
    <property type="term" value="C:ribonucleoprotein complex"/>
    <property type="evidence" value="ECO:0007669"/>
    <property type="project" value="UniProtKB-KW"/>
</dbReference>
<dbReference type="GO" id="GO:0005840">
    <property type="term" value="C:ribosome"/>
    <property type="evidence" value="ECO:0007669"/>
    <property type="project" value="UniProtKB-KW"/>
</dbReference>
<dbReference type="GO" id="GO:0019843">
    <property type="term" value="F:rRNA binding"/>
    <property type="evidence" value="ECO:0007669"/>
    <property type="project" value="UniProtKB-UniRule"/>
</dbReference>
<dbReference type="GO" id="GO:0003735">
    <property type="term" value="F:structural constituent of ribosome"/>
    <property type="evidence" value="ECO:0007669"/>
    <property type="project" value="InterPro"/>
</dbReference>
<dbReference type="GO" id="GO:0006412">
    <property type="term" value="P:translation"/>
    <property type="evidence" value="ECO:0007669"/>
    <property type="project" value="UniProtKB-UniRule"/>
</dbReference>
<dbReference type="Gene3D" id="3.40.1370.10">
    <property type="match status" value="1"/>
</dbReference>
<dbReference type="HAMAP" id="MF_01328_B">
    <property type="entry name" value="Ribosomal_uL4_B"/>
    <property type="match status" value="1"/>
</dbReference>
<dbReference type="InterPro" id="IPR002136">
    <property type="entry name" value="Ribosomal_uL4"/>
</dbReference>
<dbReference type="InterPro" id="IPR013005">
    <property type="entry name" value="Ribosomal_uL4-like"/>
</dbReference>
<dbReference type="InterPro" id="IPR023574">
    <property type="entry name" value="Ribosomal_uL4_dom_sf"/>
</dbReference>
<dbReference type="NCBIfam" id="TIGR03953">
    <property type="entry name" value="rplD_bact"/>
    <property type="match status" value="1"/>
</dbReference>
<dbReference type="PANTHER" id="PTHR10746">
    <property type="entry name" value="50S RIBOSOMAL PROTEIN L4"/>
    <property type="match status" value="1"/>
</dbReference>
<dbReference type="PANTHER" id="PTHR10746:SF17">
    <property type="entry name" value="LARGE RIBOSOMAL SUBUNIT PROTEIN UL4C"/>
    <property type="match status" value="1"/>
</dbReference>
<dbReference type="Pfam" id="PF00573">
    <property type="entry name" value="Ribosomal_L4"/>
    <property type="match status" value="1"/>
</dbReference>
<dbReference type="SUPFAM" id="SSF52166">
    <property type="entry name" value="Ribosomal protein L4"/>
    <property type="match status" value="1"/>
</dbReference>
<reference key="1">
    <citation type="journal article" date="2015" name="Proc. Natl. Acad. Sci. U.S.A.">
        <title>Trichodesmium genome maintains abundant, widespread noncoding DNA in situ, despite oligotrophic lifestyle.</title>
        <authorList>
            <person name="Walworth N."/>
            <person name="Pfreundt U."/>
            <person name="Nelson W.C."/>
            <person name="Mincer T."/>
            <person name="Heidelberg J.F."/>
            <person name="Fu F."/>
            <person name="Waterbury J.B."/>
            <person name="Glavina del Rio T."/>
            <person name="Goodwin L."/>
            <person name="Kyrpides N.C."/>
            <person name="Land M.L."/>
            <person name="Woyke T."/>
            <person name="Hutchins D.A."/>
            <person name="Hess W.R."/>
            <person name="Webb E.A."/>
        </authorList>
    </citation>
    <scope>NUCLEOTIDE SEQUENCE [LARGE SCALE GENOMIC DNA]</scope>
    <source>
        <strain>IMS101</strain>
    </source>
</reference>
<feature type="chain" id="PRO_1000052523" description="Large ribosomal subunit protein uL4">
    <location>
        <begin position="1"/>
        <end position="212"/>
    </location>
</feature>
<feature type="region of interest" description="Disordered" evidence="2">
    <location>
        <begin position="43"/>
        <end position="77"/>
    </location>
</feature>
<feature type="compositionally biased region" description="Polar residues" evidence="2">
    <location>
        <begin position="43"/>
        <end position="52"/>
    </location>
</feature>
<feature type="compositionally biased region" description="Basic residues" evidence="2">
    <location>
        <begin position="60"/>
        <end position="71"/>
    </location>
</feature>
<comment type="function">
    <text evidence="1">One of the primary rRNA binding proteins, this protein initially binds near the 5'-end of the 23S rRNA. It is important during the early stages of 50S assembly. It makes multiple contacts with different domains of the 23S rRNA in the assembled 50S subunit and ribosome.</text>
</comment>
<comment type="function">
    <text evidence="1">Forms part of the polypeptide exit tunnel.</text>
</comment>
<comment type="subunit">
    <text evidence="1">Part of the 50S ribosomal subunit.</text>
</comment>
<comment type="similarity">
    <text evidence="1">Belongs to the universal ribosomal protein uL4 family.</text>
</comment>